<name>REPD_STAAU</name>
<feature type="chain" id="PRO_0000068323" description="Replication initiation protein">
    <location>
        <begin position="1"/>
        <end position="311"/>
    </location>
</feature>
<feature type="strand" evidence="2">
    <location>
        <begin position="39"/>
        <end position="50"/>
    </location>
</feature>
<feature type="helix" evidence="2">
    <location>
        <begin position="53"/>
        <end position="65"/>
    </location>
</feature>
<feature type="strand" evidence="2">
    <location>
        <begin position="69"/>
        <end position="73"/>
    </location>
</feature>
<feature type="strand" evidence="2">
    <location>
        <begin position="76"/>
        <end position="83"/>
    </location>
</feature>
<feature type="turn" evidence="2">
    <location>
        <begin position="84"/>
        <end position="87"/>
    </location>
</feature>
<feature type="strand" evidence="2">
    <location>
        <begin position="88"/>
        <end position="93"/>
    </location>
</feature>
<feature type="helix" evidence="2">
    <location>
        <begin position="94"/>
        <end position="100"/>
    </location>
</feature>
<feature type="strand" evidence="2">
    <location>
        <begin position="105"/>
        <end position="109"/>
    </location>
</feature>
<feature type="helix" evidence="2">
    <location>
        <begin position="111"/>
        <end position="113"/>
    </location>
</feature>
<feature type="helix" evidence="2">
    <location>
        <begin position="116"/>
        <end position="125"/>
    </location>
</feature>
<feature type="helix" evidence="2">
    <location>
        <begin position="127"/>
        <end position="129"/>
    </location>
</feature>
<feature type="strand" evidence="2">
    <location>
        <begin position="131"/>
        <end position="146"/>
    </location>
</feature>
<feature type="strand" evidence="2">
    <location>
        <begin position="151"/>
        <end position="157"/>
    </location>
</feature>
<feature type="strand" evidence="2">
    <location>
        <begin position="161"/>
        <end position="165"/>
    </location>
</feature>
<feature type="strand" evidence="2">
    <location>
        <begin position="169"/>
        <end position="177"/>
    </location>
</feature>
<feature type="strand" evidence="2">
    <location>
        <begin position="179"/>
        <end position="189"/>
    </location>
</feature>
<feature type="helix" evidence="2">
    <location>
        <begin position="190"/>
        <end position="196"/>
    </location>
</feature>
<feature type="strand" evidence="2">
    <location>
        <begin position="203"/>
        <end position="205"/>
    </location>
</feature>
<feature type="strand" evidence="2">
    <location>
        <begin position="208"/>
        <end position="215"/>
    </location>
</feature>
<feature type="helix" evidence="2">
    <location>
        <begin position="216"/>
        <end position="224"/>
    </location>
</feature>
<evidence type="ECO:0000305" key="1"/>
<evidence type="ECO:0007829" key="2">
    <source>
        <dbReference type="PDB" id="4CWC"/>
    </source>
</evidence>
<organism>
    <name type="scientific">Staphylococcus aureus</name>
    <dbReference type="NCBI Taxonomy" id="1280"/>
    <lineage>
        <taxon>Bacteria</taxon>
        <taxon>Bacillati</taxon>
        <taxon>Bacillota</taxon>
        <taxon>Bacilli</taxon>
        <taxon>Bacillales</taxon>
        <taxon>Staphylococcaceae</taxon>
        <taxon>Staphylococcus</taxon>
    </lineage>
</organism>
<gene>
    <name type="primary">repD</name>
</gene>
<geneLocation type="plasmid">
    <name>pC221</name>
</geneLocation>
<sequence length="311" mass="37479">MSTENHSNYLQNKDLDNFSKTGYSNSRLSGNFFTTPQPELSFDAMTIVGNLNKTNAKKLSDFMSTEPQIRLWDILQTKFKAKALQEKVYIEYDKVKADSWDRRNMRVEFNPNKLTHEEMLWLKQNIIDYMEDDGFTRLDLAFDFEDDLSDYYAMTDKAVKKTIFYGRNGKPETKYFGVRDSDRFIRIYNKKQERKDNADVEVMSEHLWRVEIELKRDMVDYWNDCFDDLHILKPDWTTPEKVKEQAMVYLLLNEEGTWGKLERHAKYKYKQLIKEISPIDLTELMKSTLKENEKQLQKQIDFWQREFRFWK</sequence>
<protein>
    <recommendedName>
        <fullName>Replication initiation protein</fullName>
    </recommendedName>
</protein>
<comment type="function">
    <text>This protein is probably a specific topoisomerase involved in initiating replication. This protein is specifically required and may be rate-limiting for replication of the plasmid in vivo.</text>
</comment>
<comment type="miscellaneous">
    <text>The nicking site of REP proteins is sequence, but not plasmid, specific.</text>
</comment>
<comment type="similarity">
    <text evidence="1">Belongs to the plasmid replication initiation factor family.</text>
</comment>
<reference key="1">
    <citation type="journal article" date="1985" name="EMBO J.">
        <title>The use of synthetic oligonucleotides with universal templates for rapid DNA sequencing: results with staphylococcal replicon pC221.</title>
        <authorList>
            <person name="Brenner D.G."/>
            <person name="Shaw W.V."/>
        </authorList>
    </citation>
    <scope>NUCLEOTIDE SEQUENCE [GENOMIC DNA]</scope>
</reference>
<reference key="2">
    <citation type="journal article" date="1985" name="Mol. Gen. Genet.">
        <title>Comparative sequence and functional analysis of pT181 and pC221, cognate plasmid replicons from Staphylococcus aureus.</title>
        <authorList>
            <person name="Projan S.J."/>
            <person name="Kornblum J."/>
            <person name="Moghazeh S.L."/>
            <person name="Edelman I."/>
            <person name="Gennaro M.L."/>
            <person name="Novick R.P."/>
        </authorList>
    </citation>
    <scope>NUCLEOTIDE SEQUENCE [GENOMIC DNA]</scope>
</reference>
<proteinExistence type="evidence at protein level"/>
<dbReference type="EMBL" id="X02166">
    <property type="protein sequence ID" value="CAA26104.1"/>
    <property type="molecule type" value="Genomic_DNA"/>
</dbReference>
<dbReference type="EMBL" id="X02529">
    <property type="protein sequence ID" value="CAA26366.1"/>
    <property type="molecule type" value="Genomic_DNA"/>
</dbReference>
<dbReference type="PIR" id="A03601">
    <property type="entry name" value="RQSAD2"/>
</dbReference>
<dbReference type="RefSeq" id="NP_052693.1">
    <property type="nucleotide sequence ID" value="NC_002129.1"/>
</dbReference>
<dbReference type="RefSeq" id="WP_002489526.1">
    <property type="nucleotide sequence ID" value="NZ_NADF01000039.1"/>
</dbReference>
<dbReference type="RefSeq" id="YP_001595585.1">
    <property type="nucleotide sequence ID" value="NC_010111.1"/>
</dbReference>
<dbReference type="RefSeq" id="YP_232726.1">
    <property type="nucleotide sequence ID" value="NC_006977.1"/>
</dbReference>
<dbReference type="PDB" id="4CWC">
    <property type="method" value="X-ray"/>
    <property type="resolution" value="2.90 A"/>
    <property type="chains" value="A/C=32-226"/>
</dbReference>
<dbReference type="PDB" id="4CWE">
    <property type="method" value="X-ray"/>
    <property type="resolution" value="3.00 A"/>
    <property type="chains" value="A/C=32-226"/>
</dbReference>
<dbReference type="PDBsum" id="4CWC"/>
<dbReference type="PDBsum" id="4CWE"/>
<dbReference type="SMR" id="P03065"/>
<dbReference type="GO" id="GO:0006260">
    <property type="term" value="P:DNA replication"/>
    <property type="evidence" value="ECO:0007669"/>
    <property type="project" value="UniProtKB-KW"/>
</dbReference>
<dbReference type="InterPro" id="IPR003491">
    <property type="entry name" value="REP-like_C"/>
</dbReference>
<dbReference type="InterPro" id="IPR054456">
    <property type="entry name" value="RepD-like_N"/>
</dbReference>
<dbReference type="Pfam" id="PF02486">
    <property type="entry name" value="Rep_trans"/>
    <property type="match status" value="1"/>
</dbReference>
<dbReference type="Pfam" id="PF22477">
    <property type="entry name" value="RepD-like_N"/>
    <property type="match status" value="1"/>
</dbReference>
<accession>P03065</accession>
<keyword id="KW-0002">3D-structure</keyword>
<keyword id="KW-0235">DNA replication</keyword>
<keyword id="KW-0614">Plasmid</keyword>